<dbReference type="EMBL" id="CP000859">
    <property type="protein sequence ID" value="ABW66521.1"/>
    <property type="molecule type" value="Genomic_DNA"/>
</dbReference>
<dbReference type="RefSeq" id="WP_012174139.1">
    <property type="nucleotide sequence ID" value="NC_009943.1"/>
</dbReference>
<dbReference type="SMR" id="A8ZV60"/>
<dbReference type="STRING" id="96561.Dole_0711"/>
<dbReference type="KEGG" id="dol:Dole_0711"/>
<dbReference type="eggNOG" id="COG0090">
    <property type="taxonomic scope" value="Bacteria"/>
</dbReference>
<dbReference type="HOGENOM" id="CLU_036235_2_1_7"/>
<dbReference type="OrthoDB" id="9778722at2"/>
<dbReference type="Proteomes" id="UP000008561">
    <property type="component" value="Chromosome"/>
</dbReference>
<dbReference type="GO" id="GO:0015934">
    <property type="term" value="C:large ribosomal subunit"/>
    <property type="evidence" value="ECO:0007669"/>
    <property type="project" value="InterPro"/>
</dbReference>
<dbReference type="GO" id="GO:0019843">
    <property type="term" value="F:rRNA binding"/>
    <property type="evidence" value="ECO:0007669"/>
    <property type="project" value="UniProtKB-UniRule"/>
</dbReference>
<dbReference type="GO" id="GO:0003735">
    <property type="term" value="F:structural constituent of ribosome"/>
    <property type="evidence" value="ECO:0007669"/>
    <property type="project" value="InterPro"/>
</dbReference>
<dbReference type="GO" id="GO:0016740">
    <property type="term" value="F:transferase activity"/>
    <property type="evidence" value="ECO:0007669"/>
    <property type="project" value="InterPro"/>
</dbReference>
<dbReference type="GO" id="GO:0002181">
    <property type="term" value="P:cytoplasmic translation"/>
    <property type="evidence" value="ECO:0007669"/>
    <property type="project" value="TreeGrafter"/>
</dbReference>
<dbReference type="FunFam" id="2.30.30.30:FF:000001">
    <property type="entry name" value="50S ribosomal protein L2"/>
    <property type="match status" value="1"/>
</dbReference>
<dbReference type="FunFam" id="2.40.50.140:FF:000003">
    <property type="entry name" value="50S ribosomal protein L2"/>
    <property type="match status" value="1"/>
</dbReference>
<dbReference type="FunFam" id="4.10.950.10:FF:000001">
    <property type="entry name" value="50S ribosomal protein L2"/>
    <property type="match status" value="1"/>
</dbReference>
<dbReference type="Gene3D" id="2.30.30.30">
    <property type="match status" value="1"/>
</dbReference>
<dbReference type="Gene3D" id="2.40.50.140">
    <property type="entry name" value="Nucleic acid-binding proteins"/>
    <property type="match status" value="1"/>
</dbReference>
<dbReference type="Gene3D" id="4.10.950.10">
    <property type="entry name" value="Ribosomal protein L2, domain 3"/>
    <property type="match status" value="1"/>
</dbReference>
<dbReference type="HAMAP" id="MF_01320_B">
    <property type="entry name" value="Ribosomal_uL2_B"/>
    <property type="match status" value="1"/>
</dbReference>
<dbReference type="InterPro" id="IPR012340">
    <property type="entry name" value="NA-bd_OB-fold"/>
</dbReference>
<dbReference type="InterPro" id="IPR014722">
    <property type="entry name" value="Rib_uL2_dom2"/>
</dbReference>
<dbReference type="InterPro" id="IPR002171">
    <property type="entry name" value="Ribosomal_uL2"/>
</dbReference>
<dbReference type="InterPro" id="IPR005880">
    <property type="entry name" value="Ribosomal_uL2_bac/org-type"/>
</dbReference>
<dbReference type="InterPro" id="IPR022669">
    <property type="entry name" value="Ribosomal_uL2_C"/>
</dbReference>
<dbReference type="InterPro" id="IPR022671">
    <property type="entry name" value="Ribosomal_uL2_CS"/>
</dbReference>
<dbReference type="InterPro" id="IPR014726">
    <property type="entry name" value="Ribosomal_uL2_dom3"/>
</dbReference>
<dbReference type="InterPro" id="IPR022666">
    <property type="entry name" value="Ribosomal_uL2_RNA-bd_dom"/>
</dbReference>
<dbReference type="InterPro" id="IPR008991">
    <property type="entry name" value="Translation_prot_SH3-like_sf"/>
</dbReference>
<dbReference type="NCBIfam" id="TIGR01171">
    <property type="entry name" value="rplB_bact"/>
    <property type="match status" value="1"/>
</dbReference>
<dbReference type="PANTHER" id="PTHR13691:SF5">
    <property type="entry name" value="LARGE RIBOSOMAL SUBUNIT PROTEIN UL2M"/>
    <property type="match status" value="1"/>
</dbReference>
<dbReference type="PANTHER" id="PTHR13691">
    <property type="entry name" value="RIBOSOMAL PROTEIN L2"/>
    <property type="match status" value="1"/>
</dbReference>
<dbReference type="Pfam" id="PF00181">
    <property type="entry name" value="Ribosomal_L2"/>
    <property type="match status" value="1"/>
</dbReference>
<dbReference type="Pfam" id="PF03947">
    <property type="entry name" value="Ribosomal_L2_C"/>
    <property type="match status" value="1"/>
</dbReference>
<dbReference type="PIRSF" id="PIRSF002158">
    <property type="entry name" value="Ribosomal_L2"/>
    <property type="match status" value="1"/>
</dbReference>
<dbReference type="SMART" id="SM01383">
    <property type="entry name" value="Ribosomal_L2"/>
    <property type="match status" value="1"/>
</dbReference>
<dbReference type="SMART" id="SM01382">
    <property type="entry name" value="Ribosomal_L2_C"/>
    <property type="match status" value="1"/>
</dbReference>
<dbReference type="SUPFAM" id="SSF50249">
    <property type="entry name" value="Nucleic acid-binding proteins"/>
    <property type="match status" value="1"/>
</dbReference>
<dbReference type="SUPFAM" id="SSF50104">
    <property type="entry name" value="Translation proteins SH3-like domain"/>
    <property type="match status" value="1"/>
</dbReference>
<dbReference type="PROSITE" id="PS00467">
    <property type="entry name" value="RIBOSOMAL_L2"/>
    <property type="match status" value="1"/>
</dbReference>
<accession>A8ZV60</accession>
<proteinExistence type="inferred from homology"/>
<name>RL2_DESOH</name>
<evidence type="ECO:0000255" key="1">
    <source>
        <dbReference type="HAMAP-Rule" id="MF_01320"/>
    </source>
</evidence>
<evidence type="ECO:0000256" key="2">
    <source>
        <dbReference type="SAM" id="MobiDB-lite"/>
    </source>
</evidence>
<evidence type="ECO:0000305" key="3"/>
<organism>
    <name type="scientific">Desulfosudis oleivorans (strain DSM 6200 / JCM 39069 / Hxd3)</name>
    <name type="common">Desulfococcus oleovorans</name>
    <dbReference type="NCBI Taxonomy" id="96561"/>
    <lineage>
        <taxon>Bacteria</taxon>
        <taxon>Pseudomonadati</taxon>
        <taxon>Thermodesulfobacteriota</taxon>
        <taxon>Desulfobacteria</taxon>
        <taxon>Desulfobacterales</taxon>
        <taxon>Desulfosudaceae</taxon>
        <taxon>Desulfosudis</taxon>
    </lineage>
</organism>
<keyword id="KW-1185">Reference proteome</keyword>
<keyword id="KW-0687">Ribonucleoprotein</keyword>
<keyword id="KW-0689">Ribosomal protein</keyword>
<keyword id="KW-0694">RNA-binding</keyword>
<keyword id="KW-0699">rRNA-binding</keyword>
<protein>
    <recommendedName>
        <fullName evidence="1">Large ribosomal subunit protein uL2</fullName>
    </recommendedName>
    <alternativeName>
        <fullName evidence="3">50S ribosomal protein L2</fullName>
    </alternativeName>
</protein>
<comment type="function">
    <text evidence="1">One of the primary rRNA binding proteins. Required for association of the 30S and 50S subunits to form the 70S ribosome, for tRNA binding and peptide bond formation. It has been suggested to have peptidyltransferase activity; this is somewhat controversial. Makes several contacts with the 16S rRNA in the 70S ribosome.</text>
</comment>
<comment type="subunit">
    <text evidence="1">Part of the 50S ribosomal subunit. Forms a bridge to the 30S subunit in the 70S ribosome.</text>
</comment>
<comment type="similarity">
    <text evidence="1">Belongs to the universal ribosomal protein uL2 family.</text>
</comment>
<sequence>MGIRKVKPTSPGRRFQEYSTFEEITADRPSEKGLIEPLRKTGGRNVNGRITCRHRGGGHKRHYRVIDFKRNKDDIPAKVAAIEYDPNRSARIALLFYADGEKRYILAPVNLKVGDTVMSGQASEIKPGNAMPLASIPLGTEVHNIELRLGKGGQIVRSAGGYAKVMAKEARYVLLRLPSSEMRKVLATCKATIGRVGNVEHDDVSIGKAGRNRWLGKRPRVRGVAMNPVDHPMGGGEGKSSGGRHPCSPWGQQSKGVRTRNNKRTDQFIVKRRSK</sequence>
<feature type="chain" id="PRO_1000141539" description="Large ribosomal subunit protein uL2">
    <location>
        <begin position="1"/>
        <end position="275"/>
    </location>
</feature>
<feature type="region of interest" description="Disordered" evidence="2">
    <location>
        <begin position="221"/>
        <end position="275"/>
    </location>
</feature>
<gene>
    <name evidence="1" type="primary">rplB</name>
    <name type="ordered locus">Dole_0711</name>
</gene>
<reference key="1">
    <citation type="submission" date="2007-10" db="EMBL/GenBank/DDBJ databases">
        <title>Complete sequence of Desulfococcus oleovorans Hxd3.</title>
        <authorList>
            <consortium name="US DOE Joint Genome Institute"/>
            <person name="Copeland A."/>
            <person name="Lucas S."/>
            <person name="Lapidus A."/>
            <person name="Barry K."/>
            <person name="Glavina del Rio T."/>
            <person name="Dalin E."/>
            <person name="Tice H."/>
            <person name="Pitluck S."/>
            <person name="Kiss H."/>
            <person name="Brettin T."/>
            <person name="Bruce D."/>
            <person name="Detter J.C."/>
            <person name="Han C."/>
            <person name="Schmutz J."/>
            <person name="Larimer F."/>
            <person name="Land M."/>
            <person name="Hauser L."/>
            <person name="Kyrpides N."/>
            <person name="Kim E."/>
            <person name="Wawrik B."/>
            <person name="Richardson P."/>
        </authorList>
    </citation>
    <scope>NUCLEOTIDE SEQUENCE [LARGE SCALE GENOMIC DNA]</scope>
    <source>
        <strain>DSM 6200 / JCM 39069 / Hxd3</strain>
    </source>
</reference>